<feature type="signal peptide" evidence="3">
    <location>
        <begin position="1"/>
        <end position="30"/>
    </location>
</feature>
<feature type="chain" id="PRO_0000460481" description="Cadherin-AgCad1">
    <location>
        <begin position="31"/>
        <end position="1735"/>
    </location>
</feature>
<feature type="topological domain" description="Extracellular" evidence="14 15">
    <location>
        <begin position="31"/>
        <end position="1574"/>
    </location>
</feature>
<feature type="transmembrane region" description="Helical" evidence="3">
    <location>
        <begin position="1575"/>
        <end position="1595"/>
    </location>
</feature>
<feature type="topological domain" description="Cytoplasmic" evidence="14 15">
    <location>
        <begin position="1596"/>
        <end position="1735"/>
    </location>
</feature>
<feature type="domain" description="Cadherin 1" evidence="14 16">
    <location>
        <begin position="171"/>
        <end position="273"/>
    </location>
</feature>
<feature type="domain" description="Cadherin 2" evidence="4">
    <location>
        <begin position="280"/>
        <end position="378"/>
    </location>
</feature>
<feature type="domain" description="Cadherin 3" evidence="4">
    <location>
        <begin position="379"/>
        <end position="498"/>
    </location>
</feature>
<feature type="domain" description="Cadherin 4" evidence="4">
    <location>
        <begin position="499"/>
        <end position="620"/>
    </location>
</feature>
<feature type="domain" description="Cadherin 5" evidence="4">
    <location>
        <begin position="621"/>
        <end position="757"/>
    </location>
</feature>
<feature type="domain" description="Cadherin 6" evidence="4">
    <location>
        <begin position="767"/>
        <end position="866"/>
    </location>
</feature>
<feature type="domain" description="Cadherin 7" evidence="4">
    <location>
        <begin position="879"/>
        <end position="983"/>
    </location>
</feature>
<feature type="domain" description="Cadherin 8" evidence="4">
    <location>
        <begin position="985"/>
        <end position="1109"/>
    </location>
</feature>
<feature type="domain" description="Cadherin 9" evidence="4">
    <location>
        <begin position="1136"/>
        <end position="1235"/>
    </location>
</feature>
<feature type="domain" description="Cadherin 10" evidence="4">
    <location>
        <begin position="1255"/>
        <end position="1350"/>
    </location>
</feature>
<feature type="domain" description="Cadherin 11" evidence="4">
    <location>
        <begin position="1351"/>
        <end position="1461"/>
    </location>
</feature>
<feature type="region of interest" description="Extracellular domain (EC)" evidence="16">
    <location>
        <begin position="166"/>
        <end position="1456"/>
    </location>
</feature>
<feature type="region of interest" description="CR11-MPED, increases toxicity of activated Cry4B toxin, peptide alone is not toxic" evidence="6">
    <location>
        <begin position="1358"/>
        <end position="1569"/>
    </location>
</feature>
<feature type="region of interest" description="Membrane-proximal EC domain (MPED)" evidence="16">
    <location>
        <begin position="1457"/>
        <end position="1569"/>
    </location>
</feature>
<feature type="region of interest" description="Disordered" evidence="5">
    <location>
        <begin position="1701"/>
        <end position="1735"/>
    </location>
</feature>
<feature type="short sequence motif" description="Toxin-binding receptor motif 1" evidence="15">
    <location>
        <begin position="1344"/>
        <end position="1350"/>
    </location>
</feature>
<feature type="short sequence motif" description="Toxin-binding receptor motif 2" evidence="15">
    <location>
        <begin position="1446"/>
        <end position="1456"/>
    </location>
</feature>
<feature type="compositionally biased region" description="Polar residues" evidence="5">
    <location>
        <begin position="1701"/>
        <end position="1719"/>
    </location>
</feature>
<feature type="compositionally biased region" description="Basic and acidic residues" evidence="5">
    <location>
        <begin position="1722"/>
        <end position="1735"/>
    </location>
</feature>
<feature type="sequence conflict" description="In Ref. 2; AGH20077." evidence="13" ref="2">
    <original>G</original>
    <variation>A</variation>
    <location>
        <position position="101"/>
    </location>
</feature>
<feature type="sequence conflict" description="In Ref. 2; AGH20077." evidence="13" ref="2">
    <original>E</original>
    <variation>D</variation>
    <location>
        <position position="321"/>
    </location>
</feature>
<feature type="sequence conflict" description="In Ref. 1; AGN95449." evidence="13" ref="1">
    <original>T</original>
    <variation>A</variation>
    <location>
        <position position="428"/>
    </location>
</feature>
<feature type="sequence conflict" description="In Ref. 2; AGH20077." evidence="13" ref="2">
    <original>T</original>
    <variation>V</variation>
    <location>
        <position position="432"/>
    </location>
</feature>
<feature type="sequence conflict" description="In Ref. 1; AGN95449." evidence="13" ref="1">
    <original>V</original>
    <variation>I</variation>
    <location>
        <position position="520"/>
    </location>
</feature>
<feature type="sequence conflict" description="In Ref. 1; AGN95449." evidence="13" ref="1">
    <original>RLF</original>
    <variation>KLS</variation>
    <location>
        <begin position="532"/>
        <end position="534"/>
    </location>
</feature>
<feature type="sequence conflict" description="In Ref. 1; AGN95449." evidence="13" ref="1">
    <original>A</original>
    <variation>T</variation>
    <location>
        <position position="566"/>
    </location>
</feature>
<feature type="sequence conflict" description="In Ref. 1; AGN95449 and 2; AGH20077." evidence="13" ref="1 2">
    <original>P</original>
    <variation>A</variation>
    <location>
        <position position="635"/>
    </location>
</feature>
<feature type="sequence conflict" description="In Ref. 2; AGH20077." evidence="13" ref="2">
    <original>T</original>
    <variation>A</variation>
    <location>
        <position position="708"/>
    </location>
</feature>
<feature type="sequence conflict" description="In Ref. 1; AGN95449." evidence="13" ref="1">
    <original>I</original>
    <variation>T</variation>
    <location>
        <position position="816"/>
    </location>
</feature>
<feature type="sequence conflict" description="In Ref. 1; AGN95449." evidence="13" ref="1">
    <original>V</original>
    <variation>A</variation>
    <location>
        <position position="928"/>
    </location>
</feature>
<feature type="sequence conflict" description="In Ref. 1; AGN95449." evidence="13" ref="1">
    <original>L</original>
    <variation>P</variation>
    <location>
        <position position="1033"/>
    </location>
</feature>
<feature type="sequence conflict" description="In Ref. 1; AGN95449." evidence="13" ref="1">
    <original>L</original>
    <variation>P</variation>
    <location>
        <position position="1050"/>
    </location>
</feature>
<feature type="sequence conflict" description="In Ref. 1; AGN95449." evidence="13" ref="1">
    <original>H</original>
    <variation>P</variation>
    <location>
        <position position="1309"/>
    </location>
</feature>
<feature type="sequence conflict" description="In Ref. 1; AGN95449." evidence="13" ref="1">
    <original>G</original>
    <variation>S</variation>
    <location>
        <position position="1321"/>
    </location>
</feature>
<feature type="sequence conflict" description="In Ref. 1; AGN95449 and 2; AGH20077." evidence="13" ref="1 2">
    <original>S</original>
    <variation>G</variation>
    <location>
        <position position="1656"/>
    </location>
</feature>
<feature type="sequence conflict" description="In Ref. 2; AGH20077." evidence="13" ref="2">
    <original>D</original>
    <variation>H</variation>
    <location>
        <position position="1725"/>
    </location>
</feature>
<name>CADH1_ANOGA</name>
<sequence length="1735" mass="195515">MKCVASKFNMWLHLGWLLGLLLVLLPLVRCQGWGEPRFETGNVENISLAAYNEAQLQQDVWMVEEMDAPFVLLYINYQGPSEPTIRESPADLDARLQLSEGGRWSIVINRRQDYEVHQRSSLILLAVESTAIPYAIVVNLVNVLDNAPVMTAQGSCEIEELRGDFVTDCLFNVYHADGFEENGIGNSSTNELSFEIGDVAGARDHFTYVPSTVTPSQPIYNKLFNLKVLKQLDYTENAIFNFITTVYDLDRTHSFKMSTIVQVRNVDSRPPIFSRPFTSERIMEKEPFYATVIAIDRDTGLNKPICYELTALVPEYQKYFEIGQTDGKLTVHPIDRDAEQNELYTFTIVAYKCHNRLLNTSSEGAIILLDKNDNIPEIYMKPLELEFWENTIMELPFDELVIHDRDLGENARYEVRLAETVAGVQQTTDSFTIIPGNGYQRVSFTININNATSLDYELPERQTFVLHVTAHEPIEPTHESTQPITIRLKNWNDEVPKFGRDEYQISVPETIGAGELLATVTVTDRDIDDGIRLFALGRLAESLSVTELPVSAEPETNLPLYGFEIATKVGDIFDYDIAKEVIVQLQAEDTLRTAKQESLHQIFSQLTITVIDVNNKPPQITLPRGTMHILENSVPDSAVIIGEEQIAQIIGTDPDTEAELEFSIDWSNSYGTKSGIRAKAETYENCFYIHEEKVNRQRTIGTIRVNPTFPLDVDHEMYDTLFLVIRLVDRNQTILPNTVETVVAIQIDDENDNAPYFDNSTLTVVRSVKERSDSGVTIGNIIAHDIDGPGNNEITFAMEPIDPAHKGWMNIDDNGIVRVEGNRSIDCDIPPIDKVLQNVTISDWKWSNWHVFEIVLMDTNNKQPYHDPFPNDGQVYQFEKIPSNTAIVRVEGKDQDRDVPYHTVSYEINYRDFPQLQRYFEVDSTGRVYVKENNDLLDRDAGLESIMINIVMLDNAGGYDIQNRVSTNINLTLLDINDHTPKLPELAADELKVSENAKQGYIVKTPFAALDLDDKRTPNAKINYYIEEMTPELETPLFSLENIDEYNAVLRVAQDLKGFYGTWTLKIKACDRGSEYEPIIPLTEEPKDNCETRDYELTVEPFNYNTPSITYPSRSAQLRLKYESLQNGRPLVETNGSPLPKFEAIDDDGGIYGDVTFSLTSTNDGEQDHEVFRVDKVDNKTGLLVLENSLAVQPFPKNYSITVIARDGGDRQSEAAIHVVFINMTGEPAFLEPTFDTDFTENEEGRDERRQLPFAEDPKNAGLPPGAETNVYYFIDKTYGNASHLFQLDRVSNVLQLAQLLDREEIPTHEIRIVATNNENGPPDTVLESSPSLLVVRIKVNDVNDNPPVFQQRLYAAGITTNDRVPKALFRVYAEDPDEDEIIRYELVNGTAVGENLQTDGLPFRLHPDSGELTLTSKVQPNQNGYYQLTLIAFDRDDTHNDTVPAKVYIVSESNRVTFVFLNSVEEIDQPDVRKFLAQELTGAYEMECNIDDIDQTTASDGRQAGGSSSALTDVRTHFIQDNQAVEASRIQQRSSNRTFVTVLKTTLRTRGLSLQDVPPLATEALTEADETLQIILIVVSAALAVLCVILFVAFFIKIRSLNRQLKALSATDFGSISSELNGKPTRNVPTTNIFSIEGSNPVLNDNEFRDRMGGSGGGVYDDLSLQSEESDFNDVDRDIFAPKRKESLNPALLEHIRQRSLNPMANGTDKSNDGAPTSNHKKLDETDDELSHRF</sequence>
<reference evidence="18" key="1">
    <citation type="journal article" date="2008" name="Biochemistry">
        <title>Anopheles gambiae cadherin AgCad1 binds the Cry4Ba toxin of Bacillus thuringiensis israelensis and a fragment of AgCad1 synergizes toxicity.</title>
        <authorList>
            <person name="Hua G."/>
            <person name="Zhang R."/>
            <person name="Abdullah M.A."/>
            <person name="Adang M.J."/>
        </authorList>
    </citation>
    <scope>NUCLEOTIDE SEQUENCE [MRNA]</scope>
    <scope>FUNCTION (MICROBIAL INFECTION)</scope>
    <scope>SUBCELLULAR LOCATION</scope>
    <scope>TISSUE SPECIFICITY</scope>
    <scope>DOMAIN (MICROBIAL INFECTION)</scope>
    <scope>PROBABLE TOPOLOGY</scope>
    <source>
        <strain>CDC G3</strain>
        <tissue evidence="18">Larval midgut</tissue>
    </source>
</reference>
<reference evidence="17" key="2">
    <citation type="journal article" date="2013" name="Exp. Biol. Med. (Maywood)">
        <title>Cytotoxicity of the Bacillus thuringiensis Cry4B toxin is mediated by the cadherin receptor BT-R(3) of Anopheles gambiae.</title>
        <authorList>
            <person name="Ibrahim M.A."/>
            <person name="Griko N.B."/>
            <person name="Bulla L.A. Jr."/>
        </authorList>
    </citation>
    <scope>NUCLEOTIDE SEQUENCE [MRNA]</scope>
    <scope>FUNCTION AS TOXIN RECEPTOR (MICROBIAL INFECTION)</scope>
    <scope>DOMAIN (MICROBIAL INFECTION)</scope>
    <scope>PROBABLE TOPOLOGY</scope>
</reference>
<reference evidence="19" key="3">
    <citation type="journal article" date="2002" name="Science">
        <title>The genome sequence of the malaria mosquito Anopheles gambiae.</title>
        <authorList>
            <person name="Holt R.A."/>
            <person name="Subramanian G.M."/>
            <person name="Halpern A."/>
            <person name="Sutton G.G."/>
            <person name="Charlab R."/>
            <person name="Nusskern D.R."/>
            <person name="Wincker P."/>
            <person name="Clark A.G."/>
            <person name="Ribeiro J.M.C."/>
            <person name="Wides R."/>
            <person name="Salzberg S.L."/>
            <person name="Loftus B.J."/>
            <person name="Yandell M.D."/>
            <person name="Majoros W.H."/>
            <person name="Rusch D.B."/>
            <person name="Lai Z."/>
            <person name="Kraft C.L."/>
            <person name="Abril J.F."/>
            <person name="Anthouard V."/>
            <person name="Arensburger P."/>
            <person name="Atkinson P.W."/>
            <person name="Baden H."/>
            <person name="de Berardinis V."/>
            <person name="Baldwin D."/>
            <person name="Benes V."/>
            <person name="Biedler J."/>
            <person name="Blass C."/>
            <person name="Bolanos R."/>
            <person name="Boscus D."/>
            <person name="Barnstead M."/>
            <person name="Cai S."/>
            <person name="Center A."/>
            <person name="Chaturverdi K."/>
            <person name="Christophides G.K."/>
            <person name="Chrystal M.A.M."/>
            <person name="Clamp M."/>
            <person name="Cravchik A."/>
            <person name="Curwen V."/>
            <person name="Dana A."/>
            <person name="Delcher A."/>
            <person name="Dew I."/>
            <person name="Evans C.A."/>
            <person name="Flanigan M."/>
            <person name="Grundschober-Freimoser A."/>
            <person name="Friedli L."/>
            <person name="Gu Z."/>
            <person name="Guan P."/>
            <person name="Guigo R."/>
            <person name="Hillenmeyer M.E."/>
            <person name="Hladun S.L."/>
            <person name="Hogan J.R."/>
            <person name="Hong Y.S."/>
            <person name="Hoover J."/>
            <person name="Jaillon O."/>
            <person name="Ke Z."/>
            <person name="Kodira C.D."/>
            <person name="Kokoza E."/>
            <person name="Koutsos A."/>
            <person name="Letunic I."/>
            <person name="Levitsky A.A."/>
            <person name="Liang Y."/>
            <person name="Lin J.-J."/>
            <person name="Lobo N.F."/>
            <person name="Lopez J.R."/>
            <person name="Malek J.A."/>
            <person name="McIntosh T.C."/>
            <person name="Meister S."/>
            <person name="Miller J.R."/>
            <person name="Mobarry C."/>
            <person name="Mongin E."/>
            <person name="Murphy S.D."/>
            <person name="O'Brochta D.A."/>
            <person name="Pfannkoch C."/>
            <person name="Qi R."/>
            <person name="Regier M.A."/>
            <person name="Remington K."/>
            <person name="Shao H."/>
            <person name="Sharakhova M.V."/>
            <person name="Sitter C.D."/>
            <person name="Shetty J."/>
            <person name="Smith T.J."/>
            <person name="Strong R."/>
            <person name="Sun J."/>
            <person name="Thomasova D."/>
            <person name="Ton L.Q."/>
            <person name="Topalis P."/>
            <person name="Tu Z.J."/>
            <person name="Unger M.F."/>
            <person name="Walenz B."/>
            <person name="Wang A.H."/>
            <person name="Wang J."/>
            <person name="Wang M."/>
            <person name="Wang X."/>
            <person name="Woodford K.J."/>
            <person name="Wortman J.R."/>
            <person name="Wu M."/>
            <person name="Yao A."/>
            <person name="Zdobnov E.M."/>
            <person name="Zhang H."/>
            <person name="Zhao Q."/>
            <person name="Zhao S."/>
            <person name="Zhu S.C."/>
            <person name="Zhimulev I."/>
            <person name="Coluzzi M."/>
            <person name="della Torre A."/>
            <person name="Roth C.W."/>
            <person name="Louis C."/>
            <person name="Kalush F."/>
            <person name="Mural R.J."/>
            <person name="Myers E.W."/>
            <person name="Adams M.D."/>
            <person name="Smith H.O."/>
            <person name="Broder S."/>
            <person name="Gardner M.J."/>
            <person name="Fraser C.M."/>
            <person name="Birney E."/>
            <person name="Bork P."/>
            <person name="Brey P.T."/>
            <person name="Venter J.C."/>
            <person name="Weissenbach J."/>
            <person name="Kafatos F.C."/>
            <person name="Collins F.H."/>
            <person name="Hoffman S.L."/>
        </authorList>
    </citation>
    <scope>NUCLEOTIDE SEQUENCE [LARGE SCALE GENOMIC DNA]</scope>
    <source>
        <strain evidence="19">PEST</strain>
    </source>
</reference>
<reference key="4">
    <citation type="journal article" date="2023" name="Exp. Biol. Med. (Maywood)">
        <title>Cell death signaling in Anopheles gambiae initiated by Bacillus thuringiensis Cry4B toxin involves Na+/K+ ATPase.</title>
        <authorList>
            <person name="Liu L."/>
            <person name="Bulla L.A. Jr."/>
        </authorList>
    </citation>
    <scope>FUNCTION AS TOXIN RECEPTOR (MICROBIAL INFECTION)</scope>
    <scope>DOMAIN</scope>
</reference>
<protein>
    <recommendedName>
        <fullName evidence="10">Cadherin-AgCad1</fullName>
        <shortName evidence="10">AgCad1</shortName>
    </recommendedName>
    <alternativeName>
        <fullName evidence="11">Bacillus toxin-receptor 3</fullName>
        <shortName evidence="11">BT-R3</shortName>
    </alternativeName>
    <alternativeName>
        <fullName evidence="12">Cadherin G-protein coupled receptor</fullName>
        <shortName evidence="12">Cadherin GPCR</shortName>
    </alternativeName>
</protein>
<evidence type="ECO:0000250" key="1">
    <source>
        <dbReference type="UniProtKB" id="P12830"/>
    </source>
</evidence>
<evidence type="ECO:0000250" key="2">
    <source>
        <dbReference type="UniProtKB" id="Q24298"/>
    </source>
</evidence>
<evidence type="ECO:0000255" key="3"/>
<evidence type="ECO:0000255" key="4">
    <source>
        <dbReference type="PROSITE-ProRule" id="PRU00043"/>
    </source>
</evidence>
<evidence type="ECO:0000256" key="5">
    <source>
        <dbReference type="SAM" id="MobiDB-lite"/>
    </source>
</evidence>
<evidence type="ECO:0000269" key="6">
    <source>
    </source>
</evidence>
<evidence type="ECO:0000269" key="7">
    <source>
    </source>
</evidence>
<evidence type="ECO:0000269" key="8">
    <source>
    </source>
</evidence>
<evidence type="ECO:0000303" key="9">
    <source>
    </source>
</evidence>
<evidence type="ECO:0000303" key="10">
    <source>
    </source>
</evidence>
<evidence type="ECO:0000303" key="11">
    <source>
    </source>
</evidence>
<evidence type="ECO:0000303" key="12">
    <source>
    </source>
</evidence>
<evidence type="ECO:0000305" key="13"/>
<evidence type="ECO:0000305" key="14">
    <source>
    </source>
</evidence>
<evidence type="ECO:0000305" key="15">
    <source>
    </source>
</evidence>
<evidence type="ECO:0000305" key="16">
    <source>
    </source>
</evidence>
<evidence type="ECO:0000312" key="17">
    <source>
        <dbReference type="EMBL" id="AGH20077.1"/>
    </source>
</evidence>
<evidence type="ECO:0000312" key="18">
    <source>
        <dbReference type="EMBL" id="AGN95449.1"/>
    </source>
</evidence>
<evidence type="ECO:0000312" key="19">
    <source>
        <dbReference type="EnsemblMetazoa" id="AGAP002828-PA"/>
    </source>
</evidence>
<gene>
    <name evidence="10" type="primary">Cad1</name>
    <name evidence="11" type="synonym">bt-r3</name>
    <name evidence="9" type="ORF">AGAP002828</name>
</gene>
<organism>
    <name type="scientific">Anopheles gambiae</name>
    <name type="common">African malaria mosquito</name>
    <dbReference type="NCBI Taxonomy" id="7165"/>
    <lineage>
        <taxon>Eukaryota</taxon>
        <taxon>Metazoa</taxon>
        <taxon>Ecdysozoa</taxon>
        <taxon>Arthropoda</taxon>
        <taxon>Hexapoda</taxon>
        <taxon>Insecta</taxon>
        <taxon>Pterygota</taxon>
        <taxon>Neoptera</taxon>
        <taxon>Endopterygota</taxon>
        <taxon>Diptera</taxon>
        <taxon>Nematocera</taxon>
        <taxon>Culicoidea</taxon>
        <taxon>Culicidae</taxon>
        <taxon>Anophelinae</taxon>
        <taxon>Anopheles</taxon>
    </lineage>
</organism>
<proteinExistence type="evidence at protein level"/>
<comment type="function">
    <text evidence="2">Cadherins are calcium-dependent cell adhesion proteins. They preferentially interact with themselves in a homophilic manner in connecting cells.</text>
</comment>
<comment type="function">
    <text evidence="7 8 14">(Microbial infection) Binds to and is probably the functional receptor for B.thuringiensis subsp. israelensis (Bti) insecticidal toxin Cry4B (PubMed:18407662, PubMed:23788176, PubMed:37642306). Trichoplusia ni insect cells stably transfected with this protein become suspectible to Cry4B; cells undergo oncosis, they bleb and ruffle after 20-40 minutes, swell after 40-60 minutes and lyse after 90 minutes (PubMed:23788176, PubMed:37642306). Following toxin treatment in the T.in insect system levels of intracellular 3',5'-cyclic AMP (cAMP) rise 12.5-fold; EDTA but not EGTA pretreatment prevents cAMP increase (PubMed:37642306). Inorganic phosphate also rises 3.4-fold after toxin treatment (PubMed:37642306).</text>
</comment>
<comment type="subcellular location">
    <subcellularLocation>
        <location evidence="6">Apical cell membrane</location>
        <topology evidence="3">Single-pass type I membrane protein</topology>
    </subcellularLocation>
    <subcellularLocation>
        <location evidence="6">Cell projection</location>
        <location evidence="6">Microvillus membrane</location>
        <topology evidence="3">Single-pass type I membrane protein</topology>
    </subcellularLocation>
    <text evidence="6">Found in microvilli membranes in the posterior midgut of early 4th instar larvae (at protein level) (PubMed:18407662).</text>
</comment>
<comment type="tissue specificity">
    <text evidence="6">Larval midgut (at protein level) (PubMed:18407662).</text>
</comment>
<comment type="domain">
    <text evidence="1">Three calcium ions are usually bound at the interface of each cadherin domain and strengthen the connections, imparting a strong curvature to the full-length ectodomain.</text>
</comment>
<comment type="domain">
    <text evidence="6">(Microbial infection) A membrane-proximal extracellular domain fragment (residues 1358-1569, called CR11-MPED) when expressed and mixed with activated Cry4B toxin from Bti enhances the toxicity from 20% mortality to 92% mortality (PubMed:18407662). The CR11-MPED fragment does not bind Cry4B as well as purified AgCad1/BT-r3 (PubMed:18407662). Another peptide (residues 1570-1735) does not synergize toxicity (PubMed:18407662). A larger fragment (residues 874-1569, called EC7-11:MPED) also binds Cry4B; binding leads to cell death (PubMed:23788176).</text>
</comment>
<accession>A0A1S4GGP7</accession>
<accession>M4Q9W0</accession>
<accession>R9W943</accession>
<keyword id="KW-0106">Calcium</keyword>
<keyword id="KW-0130">Cell adhesion</keyword>
<keyword id="KW-1003">Cell membrane</keyword>
<keyword id="KW-0966">Cell projection</keyword>
<keyword id="KW-0472">Membrane</keyword>
<keyword id="KW-1185">Reference proteome</keyword>
<keyword id="KW-0677">Repeat</keyword>
<keyword id="KW-0732">Signal</keyword>
<keyword id="KW-0812">Transmembrane</keyword>
<keyword id="KW-1133">Transmembrane helix</keyword>
<dbReference type="EMBL" id="KC470206">
    <property type="protein sequence ID" value="AGN95449.1"/>
    <property type="molecule type" value="mRNA"/>
</dbReference>
<dbReference type="EMBL" id="KC310451">
    <property type="protein sequence ID" value="AGH20077.1"/>
    <property type="molecule type" value="mRNA"/>
</dbReference>
<dbReference type="EMBL" id="AAAB01008859">
    <property type="status" value="NOT_ANNOTATED_CDS"/>
    <property type="molecule type" value="Genomic_DNA"/>
</dbReference>
<dbReference type="SMR" id="A0A1S4GGP7"/>
<dbReference type="EnsemblMetazoa" id="AGAP002828-RA">
    <property type="protein sequence ID" value="AGAP002828-PA"/>
    <property type="gene ID" value="AGAP002828"/>
</dbReference>
<dbReference type="VEuPathDB" id="VectorBase:AGAMI1_010461"/>
<dbReference type="VEuPathDB" id="VectorBase:AGAP002828"/>
<dbReference type="HOGENOM" id="CLU_001354_2_0_1"/>
<dbReference type="InParanoid" id="A0A1S4GGP7"/>
<dbReference type="OrthoDB" id="6379298at2759"/>
<dbReference type="Proteomes" id="UP000007062">
    <property type="component" value="Chromosome 2R"/>
</dbReference>
<dbReference type="GO" id="GO:0016324">
    <property type="term" value="C:apical plasma membrane"/>
    <property type="evidence" value="ECO:0007669"/>
    <property type="project" value="UniProtKB-SubCell"/>
</dbReference>
<dbReference type="GO" id="GO:0031528">
    <property type="term" value="C:microvillus membrane"/>
    <property type="evidence" value="ECO:0007669"/>
    <property type="project" value="UniProtKB-SubCell"/>
</dbReference>
<dbReference type="GO" id="GO:0005509">
    <property type="term" value="F:calcium ion binding"/>
    <property type="evidence" value="ECO:0007669"/>
    <property type="project" value="InterPro"/>
</dbReference>
<dbReference type="GO" id="GO:0098609">
    <property type="term" value="P:cell-cell adhesion"/>
    <property type="evidence" value="ECO:0000318"/>
    <property type="project" value="GO_Central"/>
</dbReference>
<dbReference type="GO" id="GO:0007156">
    <property type="term" value="P:homophilic cell adhesion via plasma membrane adhesion molecules"/>
    <property type="evidence" value="ECO:0007669"/>
    <property type="project" value="InterPro"/>
</dbReference>
<dbReference type="CDD" id="cd11304">
    <property type="entry name" value="Cadherin_repeat"/>
    <property type="match status" value="7"/>
</dbReference>
<dbReference type="FunFam" id="2.60.40.60:FF:000637">
    <property type="entry name" value="AGAP002828-PA"/>
    <property type="match status" value="1"/>
</dbReference>
<dbReference type="FunFam" id="2.60.40.60:FF:000639">
    <property type="entry name" value="AGAP002828-PA"/>
    <property type="match status" value="1"/>
</dbReference>
<dbReference type="FunFam" id="2.60.40.60:FF:000471">
    <property type="entry name" value="E-cadherin-like protein"/>
    <property type="match status" value="1"/>
</dbReference>
<dbReference type="Gene3D" id="2.60.40.60">
    <property type="entry name" value="Cadherins"/>
    <property type="match status" value="10"/>
</dbReference>
<dbReference type="InterPro" id="IPR002126">
    <property type="entry name" value="Cadherin-like_dom"/>
</dbReference>
<dbReference type="InterPro" id="IPR015919">
    <property type="entry name" value="Cadherin-like_sf"/>
</dbReference>
<dbReference type="InterPro" id="IPR020894">
    <property type="entry name" value="Cadherin_CS"/>
</dbReference>
<dbReference type="PANTHER" id="PTHR24026:SF133">
    <property type="entry name" value="CADHERIN-RELATED FAMILY MEMBER 2"/>
    <property type="match status" value="1"/>
</dbReference>
<dbReference type="PANTHER" id="PTHR24026">
    <property type="entry name" value="FAT ATYPICAL CADHERIN-RELATED"/>
    <property type="match status" value="1"/>
</dbReference>
<dbReference type="PRINTS" id="PR00205">
    <property type="entry name" value="CADHERIN"/>
</dbReference>
<dbReference type="SMART" id="SM00112">
    <property type="entry name" value="CA"/>
    <property type="match status" value="9"/>
</dbReference>
<dbReference type="SUPFAM" id="SSF49313">
    <property type="entry name" value="Cadherin-like"/>
    <property type="match status" value="9"/>
</dbReference>
<dbReference type="PROSITE" id="PS00232">
    <property type="entry name" value="CADHERIN_1"/>
    <property type="match status" value="3"/>
</dbReference>
<dbReference type="PROSITE" id="PS50268">
    <property type="entry name" value="CADHERIN_2"/>
    <property type="match status" value="10"/>
</dbReference>